<dbReference type="EC" id="2.3.1.15" evidence="1"/>
<dbReference type="EMBL" id="CP000446">
    <property type="protein sequence ID" value="ABI40851.1"/>
    <property type="molecule type" value="Genomic_DNA"/>
</dbReference>
<dbReference type="RefSeq" id="WP_011624509.1">
    <property type="nucleotide sequence ID" value="NC_008321.1"/>
</dbReference>
<dbReference type="SMR" id="Q0HDL6"/>
<dbReference type="KEGG" id="she:Shewmr4_3788"/>
<dbReference type="HOGENOM" id="CLU_015407_0_0_6"/>
<dbReference type="UniPathway" id="UPA00557">
    <property type="reaction ID" value="UER00612"/>
</dbReference>
<dbReference type="GO" id="GO:0005886">
    <property type="term" value="C:plasma membrane"/>
    <property type="evidence" value="ECO:0007669"/>
    <property type="project" value="UniProtKB-SubCell"/>
</dbReference>
<dbReference type="GO" id="GO:0004366">
    <property type="term" value="F:glycerol-3-phosphate O-acyltransferase activity"/>
    <property type="evidence" value="ECO:0007669"/>
    <property type="project" value="UniProtKB-UniRule"/>
</dbReference>
<dbReference type="GO" id="GO:0016024">
    <property type="term" value="P:CDP-diacylglycerol biosynthetic process"/>
    <property type="evidence" value="ECO:0007669"/>
    <property type="project" value="UniProtKB-UniRule"/>
</dbReference>
<dbReference type="GO" id="GO:0006631">
    <property type="term" value="P:fatty acid metabolic process"/>
    <property type="evidence" value="ECO:0007669"/>
    <property type="project" value="TreeGrafter"/>
</dbReference>
<dbReference type="CDD" id="cd07993">
    <property type="entry name" value="LPLAT_DHAPAT-like"/>
    <property type="match status" value="1"/>
</dbReference>
<dbReference type="HAMAP" id="MF_00393">
    <property type="entry name" value="Glyc3P_acyltrans"/>
    <property type="match status" value="1"/>
</dbReference>
<dbReference type="InterPro" id="IPR022284">
    <property type="entry name" value="GPAT/DHAPAT"/>
</dbReference>
<dbReference type="InterPro" id="IPR045520">
    <property type="entry name" value="GPAT/DHAPAT_C"/>
</dbReference>
<dbReference type="InterPro" id="IPR041728">
    <property type="entry name" value="GPAT/DHAPAT_LPLAT"/>
</dbReference>
<dbReference type="InterPro" id="IPR028354">
    <property type="entry name" value="GPAT_PlsB"/>
</dbReference>
<dbReference type="InterPro" id="IPR002123">
    <property type="entry name" value="Plipid/glycerol_acylTrfase"/>
</dbReference>
<dbReference type="NCBIfam" id="TIGR03703">
    <property type="entry name" value="plsB"/>
    <property type="match status" value="1"/>
</dbReference>
<dbReference type="NCBIfam" id="NF003441">
    <property type="entry name" value="PRK04974.1"/>
    <property type="match status" value="1"/>
</dbReference>
<dbReference type="PANTHER" id="PTHR12563:SF17">
    <property type="entry name" value="DIHYDROXYACETONE PHOSPHATE ACYLTRANSFERASE"/>
    <property type="match status" value="1"/>
</dbReference>
<dbReference type="PANTHER" id="PTHR12563">
    <property type="entry name" value="GLYCEROL-3-PHOSPHATE ACYLTRANSFERASE"/>
    <property type="match status" value="1"/>
</dbReference>
<dbReference type="Pfam" id="PF01553">
    <property type="entry name" value="Acyltransferase"/>
    <property type="match status" value="1"/>
</dbReference>
<dbReference type="Pfam" id="PF19277">
    <property type="entry name" value="GPAT_C"/>
    <property type="match status" value="1"/>
</dbReference>
<dbReference type="PIRSF" id="PIRSF500064">
    <property type="entry name" value="GPAT"/>
    <property type="match status" value="1"/>
</dbReference>
<dbReference type="PIRSF" id="PIRSF000437">
    <property type="entry name" value="GPAT_DHAPAT"/>
    <property type="match status" value="1"/>
</dbReference>
<dbReference type="SMART" id="SM00563">
    <property type="entry name" value="PlsC"/>
    <property type="match status" value="1"/>
</dbReference>
<dbReference type="SUPFAM" id="SSF69593">
    <property type="entry name" value="Glycerol-3-phosphate (1)-acyltransferase"/>
    <property type="match status" value="1"/>
</dbReference>
<gene>
    <name evidence="1" type="primary">plsB</name>
    <name type="ordered locus">Shewmr4_3788</name>
</gene>
<feature type="chain" id="PRO_1000049461" description="Glycerol-3-phosphate acyltransferase">
    <location>
        <begin position="1"/>
        <end position="807"/>
    </location>
</feature>
<feature type="short sequence motif" description="HXXXXD motif">
    <location>
        <begin position="308"/>
        <end position="313"/>
    </location>
</feature>
<organism>
    <name type="scientific">Shewanella sp. (strain MR-4)</name>
    <dbReference type="NCBI Taxonomy" id="60480"/>
    <lineage>
        <taxon>Bacteria</taxon>
        <taxon>Pseudomonadati</taxon>
        <taxon>Pseudomonadota</taxon>
        <taxon>Gammaproteobacteria</taxon>
        <taxon>Alteromonadales</taxon>
        <taxon>Shewanellaceae</taxon>
        <taxon>Shewanella</taxon>
    </lineage>
</organism>
<proteinExistence type="inferred from homology"/>
<name>PLSB_SHESM</name>
<protein>
    <recommendedName>
        <fullName evidence="1">Glycerol-3-phosphate acyltransferase</fullName>
        <shortName evidence="1">GPAT</shortName>
        <ecNumber evidence="1">2.3.1.15</ecNumber>
    </recommendedName>
</protein>
<evidence type="ECO:0000255" key="1">
    <source>
        <dbReference type="HAMAP-Rule" id="MF_00393"/>
    </source>
</evidence>
<keyword id="KW-0012">Acyltransferase</keyword>
<keyword id="KW-0997">Cell inner membrane</keyword>
<keyword id="KW-1003">Cell membrane</keyword>
<keyword id="KW-0444">Lipid biosynthesis</keyword>
<keyword id="KW-0443">Lipid metabolism</keyword>
<keyword id="KW-0472">Membrane</keyword>
<keyword id="KW-0594">Phospholipid biosynthesis</keyword>
<keyword id="KW-1208">Phospholipid metabolism</keyword>
<keyword id="KW-0808">Transferase</keyword>
<reference key="1">
    <citation type="submission" date="2006-08" db="EMBL/GenBank/DDBJ databases">
        <title>Complete sequence of Shewanella sp. MR-4.</title>
        <authorList>
            <consortium name="US DOE Joint Genome Institute"/>
            <person name="Copeland A."/>
            <person name="Lucas S."/>
            <person name="Lapidus A."/>
            <person name="Barry K."/>
            <person name="Detter J.C."/>
            <person name="Glavina del Rio T."/>
            <person name="Hammon N."/>
            <person name="Israni S."/>
            <person name="Dalin E."/>
            <person name="Tice H."/>
            <person name="Pitluck S."/>
            <person name="Kiss H."/>
            <person name="Brettin T."/>
            <person name="Bruce D."/>
            <person name="Han C."/>
            <person name="Tapia R."/>
            <person name="Gilna P."/>
            <person name="Schmutz J."/>
            <person name="Larimer F."/>
            <person name="Land M."/>
            <person name="Hauser L."/>
            <person name="Kyrpides N."/>
            <person name="Mikhailova N."/>
            <person name="Nealson K."/>
            <person name="Konstantinidis K."/>
            <person name="Klappenbach J."/>
            <person name="Tiedje J."/>
            <person name="Richardson P."/>
        </authorList>
    </citation>
    <scope>NUCLEOTIDE SEQUENCE [LARGE SCALE GENOMIC DNA]</scope>
    <source>
        <strain>MR-4</strain>
    </source>
</reference>
<sequence>MPKQDSLWLKSLRWIQKHLVHTIVVPQDPFADLNLDASRPLAYVMKTESLSDIAALSEITTKLGLPSPYEPLVVNGVVAPRVVCLEGRKPLFGERASNEPFLECFMRLLAVHKEKPELDIQLVPVSLYWGRTPGKEDDTMKAAVLERENPTWLRKCLMILFLGRHNFVQFSNAVSLRYMADEHGTDMGIAHKLARVARVHFRRQRKVMTGPVLPNRQAMFHSLLKSESLRKAIQEEAASKKISETQARETAIEYLDEIAANYSDSLVRIAERFLTWLWNKLYSGINIKGAEQIRQLHHDGHEIVYVPCHRSHMDYLLLSYILYYQGMVPPHIAAGINLNFWPAGPLFRRGGAFFIRRSFNGNKLYTAVFREYLDQLFAKGYSVEYFSEGGRSRTGRLLAPKTGMIAMTINSVLRGIERPVTLVPVYLGYDHVMEVATYHKELSGKKKQKESVWQVFGAIRKLGNFGQGYVNFGEPITLQNFLNETAPNWRAEVADDPEQKPTWLTPAVNVLANRVMTRINDAAAASSITLTSLVLLASEQNALERCLLERQLDLYLTLLKRVPYTSFTSVAEGDGKHLVQQGLELNKFSINADPLGEIVSIDANQAISMTYYRNNIIHLFIIPSLIASCLTNNKQISRAHILGIVSDFYPLLKAELFMGIKDLPSYVNQVLDLFIEQGLVQESDTLSVVTEHTSQMLLLAGSVSETLQRYAIIFNLLAHRPKMERSELESESHLLAQRLGALHGITAPEFYDKKLYNTLSVKLKELGYFSEKEDKSDVERIRDQANSLLRASVRQTIVASVTAEHIV</sequence>
<accession>Q0HDL6</accession>
<comment type="catalytic activity">
    <reaction evidence="1">
        <text>sn-glycerol 3-phosphate + an acyl-CoA = a 1-acyl-sn-glycero-3-phosphate + CoA</text>
        <dbReference type="Rhea" id="RHEA:15325"/>
        <dbReference type="ChEBI" id="CHEBI:57287"/>
        <dbReference type="ChEBI" id="CHEBI:57597"/>
        <dbReference type="ChEBI" id="CHEBI:57970"/>
        <dbReference type="ChEBI" id="CHEBI:58342"/>
        <dbReference type="EC" id="2.3.1.15"/>
    </reaction>
</comment>
<comment type="pathway">
    <text evidence="1">Phospholipid metabolism; CDP-diacylglycerol biosynthesis; CDP-diacylglycerol from sn-glycerol 3-phosphate: step 1/3.</text>
</comment>
<comment type="subcellular location">
    <subcellularLocation>
        <location evidence="1">Cell inner membrane</location>
        <topology evidence="1">Peripheral membrane protein</topology>
        <orientation evidence="1">Cytoplasmic side</orientation>
    </subcellularLocation>
</comment>
<comment type="domain">
    <text evidence="1">The HXXXXD motif is essential for acyltransferase activity and may constitute the binding site for the phosphate moiety of the glycerol-3-phosphate.</text>
</comment>
<comment type="similarity">
    <text evidence="1">Belongs to the GPAT/DAPAT family.</text>
</comment>